<protein>
    <recommendedName>
        <fullName evidence="1">Probable transcriptional regulatory protein YebC</fullName>
    </recommendedName>
</protein>
<feature type="chain" id="PRO_0000257062" description="Probable transcriptional regulatory protein YebC">
    <location>
        <begin position="1"/>
        <end position="246"/>
    </location>
</feature>
<feature type="region of interest" description="Disordered" evidence="2">
    <location>
        <begin position="1"/>
        <end position="20"/>
    </location>
</feature>
<sequence length="246" mass="26437">MAGHSKWANTRHRKAAQDAKRGKIFTKIIRELVTAAKLGGGDPDANPRLRAAIDKALSNNMTRDTLNRAIARGVGGDDDANMETIIYEGYGPGGTAIMIECLSDNRNRTVAEVRHAFSKCGGNLGTDGSVAYLFSKKGVISFEKGDEDTIMEAALEAGAEDVVTYDDGAIDVYTAWEEMGKVRDALEAAGLKADSAEVSMIPSTKADMDAETAPKLMRLIDMLEDCDDVQEVYHNGEISDEVAATL</sequence>
<name>YEBC_ECOUT</name>
<comment type="subcellular location">
    <subcellularLocation>
        <location evidence="1">Cytoplasm</location>
    </subcellularLocation>
</comment>
<comment type="similarity">
    <text evidence="1">Belongs to the TACO1 family.</text>
</comment>
<evidence type="ECO:0000255" key="1">
    <source>
        <dbReference type="HAMAP-Rule" id="MF_00693"/>
    </source>
</evidence>
<evidence type="ECO:0000256" key="2">
    <source>
        <dbReference type="SAM" id="MobiDB-lite"/>
    </source>
</evidence>
<organism>
    <name type="scientific">Escherichia coli (strain UTI89 / UPEC)</name>
    <dbReference type="NCBI Taxonomy" id="364106"/>
    <lineage>
        <taxon>Bacteria</taxon>
        <taxon>Pseudomonadati</taxon>
        <taxon>Pseudomonadota</taxon>
        <taxon>Gammaproteobacteria</taxon>
        <taxon>Enterobacterales</taxon>
        <taxon>Enterobacteriaceae</taxon>
        <taxon>Escherichia</taxon>
    </lineage>
</organism>
<dbReference type="EMBL" id="CP000243">
    <property type="protein sequence ID" value="ABE07544.1"/>
    <property type="molecule type" value="Genomic_DNA"/>
</dbReference>
<dbReference type="RefSeq" id="WP_000907234.1">
    <property type="nucleotide sequence ID" value="NZ_CP064825.1"/>
</dbReference>
<dbReference type="SMR" id="Q1RAS0"/>
<dbReference type="KEGG" id="eci:UTI89_C2068"/>
<dbReference type="HOGENOM" id="CLU_062974_2_2_6"/>
<dbReference type="Proteomes" id="UP000001952">
    <property type="component" value="Chromosome"/>
</dbReference>
<dbReference type="GO" id="GO:0005829">
    <property type="term" value="C:cytosol"/>
    <property type="evidence" value="ECO:0007669"/>
    <property type="project" value="TreeGrafter"/>
</dbReference>
<dbReference type="GO" id="GO:0003677">
    <property type="term" value="F:DNA binding"/>
    <property type="evidence" value="ECO:0007669"/>
    <property type="project" value="UniProtKB-UniRule"/>
</dbReference>
<dbReference type="GO" id="GO:0006355">
    <property type="term" value="P:regulation of DNA-templated transcription"/>
    <property type="evidence" value="ECO:0007669"/>
    <property type="project" value="UniProtKB-UniRule"/>
</dbReference>
<dbReference type="FunFam" id="1.10.10.200:FF:000001">
    <property type="entry name" value="Probable transcriptional regulatory protein YebC"/>
    <property type="match status" value="1"/>
</dbReference>
<dbReference type="FunFam" id="3.30.70.980:FF:000002">
    <property type="entry name" value="Probable transcriptional regulatory protein YebC"/>
    <property type="match status" value="1"/>
</dbReference>
<dbReference type="Gene3D" id="1.10.10.200">
    <property type="match status" value="1"/>
</dbReference>
<dbReference type="Gene3D" id="3.30.70.980">
    <property type="match status" value="2"/>
</dbReference>
<dbReference type="HAMAP" id="MF_00693">
    <property type="entry name" value="Transcrip_reg_TACO1"/>
    <property type="match status" value="1"/>
</dbReference>
<dbReference type="InterPro" id="IPR017856">
    <property type="entry name" value="Integrase-like_N"/>
</dbReference>
<dbReference type="InterPro" id="IPR048300">
    <property type="entry name" value="TACO1_YebC-like_2nd/3rd_dom"/>
</dbReference>
<dbReference type="InterPro" id="IPR049083">
    <property type="entry name" value="TACO1_YebC_N"/>
</dbReference>
<dbReference type="InterPro" id="IPR002876">
    <property type="entry name" value="Transcrip_reg_TACO1-like"/>
</dbReference>
<dbReference type="InterPro" id="IPR026564">
    <property type="entry name" value="Transcrip_reg_TACO1-like_dom3"/>
</dbReference>
<dbReference type="InterPro" id="IPR029072">
    <property type="entry name" value="YebC-like"/>
</dbReference>
<dbReference type="NCBIfam" id="NF001030">
    <property type="entry name" value="PRK00110.1"/>
    <property type="match status" value="1"/>
</dbReference>
<dbReference type="NCBIfam" id="NF009044">
    <property type="entry name" value="PRK12378.1"/>
    <property type="match status" value="1"/>
</dbReference>
<dbReference type="NCBIfam" id="TIGR01033">
    <property type="entry name" value="YebC/PmpR family DNA-binding transcriptional regulator"/>
    <property type="match status" value="1"/>
</dbReference>
<dbReference type="PANTHER" id="PTHR12532:SF6">
    <property type="entry name" value="TRANSCRIPTIONAL REGULATORY PROTEIN YEBC-RELATED"/>
    <property type="match status" value="1"/>
</dbReference>
<dbReference type="PANTHER" id="PTHR12532">
    <property type="entry name" value="TRANSLATIONAL ACTIVATOR OF CYTOCHROME C OXIDASE 1"/>
    <property type="match status" value="1"/>
</dbReference>
<dbReference type="Pfam" id="PF20772">
    <property type="entry name" value="TACO1_YebC_N"/>
    <property type="match status" value="1"/>
</dbReference>
<dbReference type="Pfam" id="PF01709">
    <property type="entry name" value="Transcrip_reg"/>
    <property type="match status" value="1"/>
</dbReference>
<dbReference type="SUPFAM" id="SSF75625">
    <property type="entry name" value="YebC-like"/>
    <property type="match status" value="1"/>
</dbReference>
<reference key="1">
    <citation type="journal article" date="2006" name="Proc. Natl. Acad. Sci. U.S.A.">
        <title>Identification of genes subject to positive selection in uropathogenic strains of Escherichia coli: a comparative genomics approach.</title>
        <authorList>
            <person name="Chen S.L."/>
            <person name="Hung C.-S."/>
            <person name="Xu J."/>
            <person name="Reigstad C.S."/>
            <person name="Magrini V."/>
            <person name="Sabo A."/>
            <person name="Blasiar D."/>
            <person name="Bieri T."/>
            <person name="Meyer R.R."/>
            <person name="Ozersky P."/>
            <person name="Armstrong J.R."/>
            <person name="Fulton R.S."/>
            <person name="Latreille J.P."/>
            <person name="Spieth J."/>
            <person name="Hooton T.M."/>
            <person name="Mardis E.R."/>
            <person name="Hultgren S.J."/>
            <person name="Gordon J.I."/>
        </authorList>
    </citation>
    <scope>NUCLEOTIDE SEQUENCE [LARGE SCALE GENOMIC DNA]</scope>
    <source>
        <strain>UTI89 / UPEC</strain>
    </source>
</reference>
<gene>
    <name evidence="1" type="primary">yebC</name>
    <name type="ordered locus">UTI89_C2068</name>
</gene>
<keyword id="KW-0963">Cytoplasm</keyword>
<keyword id="KW-0238">DNA-binding</keyword>
<keyword id="KW-0804">Transcription</keyword>
<keyword id="KW-0805">Transcription regulation</keyword>
<accession>Q1RAS0</accession>
<proteinExistence type="inferred from homology"/>